<protein>
    <recommendedName>
        <fullName>Homeobox-leucine zipper protein HOX24</fullName>
    </recommendedName>
    <alternativeName>
        <fullName>HD-ZIP protein HOX24</fullName>
    </alternativeName>
    <alternativeName>
        <fullName>Homeodomain transcription factor HOX24</fullName>
    </alternativeName>
    <alternativeName>
        <fullName>OsHox24</fullName>
    </alternativeName>
</protein>
<gene>
    <name type="primary">HOX24</name>
    <name type="ORF">OsI_08284</name>
</gene>
<name>HOX24_ORYSI</name>
<comment type="function">
    <text evidence="1">Probable transcription factor.</text>
</comment>
<comment type="subcellular location">
    <subcellularLocation>
        <location evidence="5">Nucleus</location>
    </subcellularLocation>
</comment>
<comment type="tissue specificity">
    <text evidence="4">Expressed in roots and panicles.</text>
</comment>
<comment type="induction">
    <text evidence="4">In leaves by drought stress.</text>
</comment>
<comment type="similarity">
    <text evidence="5">Belongs to the HD-ZIP homeobox family. Class I subfamily.</text>
</comment>
<reference key="1">
    <citation type="journal article" date="2005" name="PLoS Biol.">
        <title>The genomes of Oryza sativa: a history of duplications.</title>
        <authorList>
            <person name="Yu J."/>
            <person name="Wang J."/>
            <person name="Lin W."/>
            <person name="Li S."/>
            <person name="Li H."/>
            <person name="Zhou J."/>
            <person name="Ni P."/>
            <person name="Dong W."/>
            <person name="Hu S."/>
            <person name="Zeng C."/>
            <person name="Zhang J."/>
            <person name="Zhang Y."/>
            <person name="Li R."/>
            <person name="Xu Z."/>
            <person name="Li S."/>
            <person name="Li X."/>
            <person name="Zheng H."/>
            <person name="Cong L."/>
            <person name="Lin L."/>
            <person name="Yin J."/>
            <person name="Geng J."/>
            <person name="Li G."/>
            <person name="Shi J."/>
            <person name="Liu J."/>
            <person name="Lv H."/>
            <person name="Li J."/>
            <person name="Wang J."/>
            <person name="Deng Y."/>
            <person name="Ran L."/>
            <person name="Shi X."/>
            <person name="Wang X."/>
            <person name="Wu Q."/>
            <person name="Li C."/>
            <person name="Ren X."/>
            <person name="Wang J."/>
            <person name="Wang X."/>
            <person name="Li D."/>
            <person name="Liu D."/>
            <person name="Zhang X."/>
            <person name="Ji Z."/>
            <person name="Zhao W."/>
            <person name="Sun Y."/>
            <person name="Zhang Z."/>
            <person name="Bao J."/>
            <person name="Han Y."/>
            <person name="Dong L."/>
            <person name="Ji J."/>
            <person name="Chen P."/>
            <person name="Wu S."/>
            <person name="Liu J."/>
            <person name="Xiao Y."/>
            <person name="Bu D."/>
            <person name="Tan J."/>
            <person name="Yang L."/>
            <person name="Ye C."/>
            <person name="Zhang J."/>
            <person name="Xu J."/>
            <person name="Zhou Y."/>
            <person name="Yu Y."/>
            <person name="Zhang B."/>
            <person name="Zhuang S."/>
            <person name="Wei H."/>
            <person name="Liu B."/>
            <person name="Lei M."/>
            <person name="Yu H."/>
            <person name="Li Y."/>
            <person name="Xu H."/>
            <person name="Wei S."/>
            <person name="He X."/>
            <person name="Fang L."/>
            <person name="Zhang Z."/>
            <person name="Zhang Y."/>
            <person name="Huang X."/>
            <person name="Su Z."/>
            <person name="Tong W."/>
            <person name="Li J."/>
            <person name="Tong Z."/>
            <person name="Li S."/>
            <person name="Ye J."/>
            <person name="Wang L."/>
            <person name="Fang L."/>
            <person name="Lei T."/>
            <person name="Chen C.-S."/>
            <person name="Chen H.-C."/>
            <person name="Xu Z."/>
            <person name="Li H."/>
            <person name="Huang H."/>
            <person name="Zhang F."/>
            <person name="Xu H."/>
            <person name="Li N."/>
            <person name="Zhao C."/>
            <person name="Li S."/>
            <person name="Dong L."/>
            <person name="Huang Y."/>
            <person name="Li L."/>
            <person name="Xi Y."/>
            <person name="Qi Q."/>
            <person name="Li W."/>
            <person name="Zhang B."/>
            <person name="Hu W."/>
            <person name="Zhang Y."/>
            <person name="Tian X."/>
            <person name="Jiao Y."/>
            <person name="Liang X."/>
            <person name="Jin J."/>
            <person name="Gao L."/>
            <person name="Zheng W."/>
            <person name="Hao B."/>
            <person name="Liu S.-M."/>
            <person name="Wang W."/>
            <person name="Yuan L."/>
            <person name="Cao M."/>
            <person name="McDermott J."/>
            <person name="Samudrala R."/>
            <person name="Wang J."/>
            <person name="Wong G.K.-S."/>
            <person name="Yang H."/>
        </authorList>
    </citation>
    <scope>NUCLEOTIDE SEQUENCE [LARGE SCALE GENOMIC DNA]</scope>
    <source>
        <strain>cv. 93-11</strain>
    </source>
</reference>
<reference key="2">
    <citation type="journal article" date="1992" name="Mol. Gen. Genet.">
        <title>Characterization and genetic mapping of a short, highly repeated, interspersed DNA sequence from rice (Oryza sativa L.).</title>
        <authorList>
            <person name="Zhao X."/>
            <person name="Kochert G."/>
        </authorList>
    </citation>
    <scope>NUCLEOTIDE SEQUENCE [GENOMIC DNA] OF 1-101</scope>
    <source>
        <strain>cv. IR36</strain>
    </source>
</reference>
<reference key="3">
    <citation type="journal article" date="2008" name="Plant Mol. Biol.">
        <title>A genome-wide survey of HD-Zip genes in rice and analysis of drought-responsive family members.</title>
        <authorList>
            <person name="Agalou A."/>
            <person name="Purwantomo S."/>
            <person name="Oevernaes E."/>
            <person name="Johannesson H."/>
            <person name="Zhu X."/>
            <person name="Estiati A."/>
            <person name="de Kam R.J."/>
            <person name="Engstroem P."/>
            <person name="Slamet-Loedin I.H."/>
            <person name="Zhu Z."/>
            <person name="Wang M."/>
            <person name="Xiong L."/>
            <person name="Meijer A.H."/>
            <person name="Ouwerkerk P.B.F."/>
        </authorList>
    </citation>
    <scope>NUCLEOTIDE SEQUENCE [MRNA] OF 93-244</scope>
    <scope>TISSUE SPECIFICITY</scope>
    <scope>INDUCTION</scope>
    <scope>GENE FAMILY</scope>
    <scope>NOMENCLATURE</scope>
    <source>
        <strain>cv. Minghui 86</strain>
    </source>
</reference>
<keyword id="KW-0238">DNA-binding</keyword>
<keyword id="KW-0371">Homeobox</keyword>
<keyword id="KW-0539">Nucleus</keyword>
<keyword id="KW-1185">Reference proteome</keyword>
<keyword id="KW-0804">Transcription</keyword>
<keyword id="KW-0805">Transcription regulation</keyword>
<accession>A2X7U1</accession>
<accession>A5JPW1</accession>
<accession>B8AG15</accession>
<accession>Q07966</accession>
<proteinExistence type="evidence at transcript level"/>
<feature type="chain" id="PRO_0000331720" description="Homeobox-leucine zipper protein HOX24">
    <location>
        <begin position="1"/>
        <end position="262"/>
    </location>
</feature>
<feature type="DNA-binding region" description="Homeobox" evidence="2">
    <location>
        <begin position="61"/>
        <end position="122"/>
    </location>
</feature>
<feature type="region of interest" description="Disordered" evidence="3">
    <location>
        <begin position="44"/>
        <end position="68"/>
    </location>
</feature>
<feature type="region of interest" description="Leucine-zipper">
    <location>
        <begin position="121"/>
        <end position="165"/>
    </location>
</feature>
<feature type="region of interest" description="Disordered" evidence="3">
    <location>
        <begin position="162"/>
        <end position="189"/>
    </location>
</feature>
<feature type="compositionally biased region" description="Gly residues" evidence="3">
    <location>
        <begin position="46"/>
        <end position="62"/>
    </location>
</feature>
<feature type="sequence conflict" description="In Ref. 2; CAA46022." evidence="5" ref="2">
    <original>EL</original>
    <variation>DV</variation>
    <location>
        <begin position="95"/>
        <end position="96"/>
    </location>
</feature>
<sequence>MESDCQFLVAPPQPHMYYDTAAAAVDEAQFLRQMVAAADHHAAAAGRGGGDGDGGGGGGGGGGERKRRFTEEQVRSLETTFHARRAKLEPREKAELARELGLQPRQVAIWFQNKRARWRSKQIEHDYAALRAQYDALHARVESLRQEKLALAAQVDELRGKLNERQDQSGSCDGGGAEGDDDDKRNSVMNASSSGLVEEDYVSCLAVPVVDVSEDGSAACGGSSYEYDHHLDYLGGGQLPDPFCGMPDLWETWPMVEWNAVA</sequence>
<organism>
    <name type="scientific">Oryza sativa subsp. indica</name>
    <name type="common">Rice</name>
    <dbReference type="NCBI Taxonomy" id="39946"/>
    <lineage>
        <taxon>Eukaryota</taxon>
        <taxon>Viridiplantae</taxon>
        <taxon>Streptophyta</taxon>
        <taxon>Embryophyta</taxon>
        <taxon>Tracheophyta</taxon>
        <taxon>Spermatophyta</taxon>
        <taxon>Magnoliopsida</taxon>
        <taxon>Liliopsida</taxon>
        <taxon>Poales</taxon>
        <taxon>Poaceae</taxon>
        <taxon>BOP clade</taxon>
        <taxon>Oryzoideae</taxon>
        <taxon>Oryzeae</taxon>
        <taxon>Oryzinae</taxon>
        <taxon>Oryza</taxon>
        <taxon>Oryza sativa</taxon>
    </lineage>
</organism>
<evidence type="ECO:0000250" key="1"/>
<evidence type="ECO:0000255" key="2">
    <source>
        <dbReference type="PROSITE-ProRule" id="PRU00108"/>
    </source>
</evidence>
<evidence type="ECO:0000256" key="3">
    <source>
        <dbReference type="SAM" id="MobiDB-lite"/>
    </source>
</evidence>
<evidence type="ECO:0000269" key="4">
    <source>
    </source>
</evidence>
<evidence type="ECO:0000305" key="5"/>
<dbReference type="EMBL" id="CM000127">
    <property type="protein sequence ID" value="EEC73698.1"/>
    <property type="molecule type" value="Genomic_DNA"/>
</dbReference>
<dbReference type="EMBL" id="X64775">
    <property type="protein sequence ID" value="CAA46022.1"/>
    <property type="molecule type" value="Genomic_DNA"/>
</dbReference>
<dbReference type="EMBL" id="EF555546">
    <property type="protein sequence ID" value="ABQ57287.1"/>
    <property type="molecule type" value="mRNA"/>
</dbReference>
<dbReference type="PIR" id="S20482">
    <property type="entry name" value="S20482"/>
</dbReference>
<dbReference type="SMR" id="A2X7U1"/>
<dbReference type="EnsemblPlants" id="BGIOSGA008720-TA">
    <property type="protein sequence ID" value="BGIOSGA008720-PA"/>
    <property type="gene ID" value="BGIOSGA008720"/>
</dbReference>
<dbReference type="EnsemblPlants" id="OsLaMu_02g0026460.01">
    <property type="protein sequence ID" value="OsLaMu_02g0026460.01"/>
    <property type="gene ID" value="OsLaMu_02g0026460"/>
</dbReference>
<dbReference type="EnsemblPlants" id="OsPr106_02g0026750.01">
    <property type="protein sequence ID" value="OsPr106_02g0026750.01"/>
    <property type="gene ID" value="OsPr106_02g0026750"/>
</dbReference>
<dbReference type="Gramene" id="BGIOSGA008720-TA">
    <property type="protein sequence ID" value="BGIOSGA008720-PA"/>
    <property type="gene ID" value="BGIOSGA008720"/>
</dbReference>
<dbReference type="Gramene" id="OsLaMu_02g0026460.01">
    <property type="protein sequence ID" value="OsLaMu_02g0026460.01"/>
    <property type="gene ID" value="OsLaMu_02g0026460"/>
</dbReference>
<dbReference type="Gramene" id="OsPr106_02g0026750.01">
    <property type="protein sequence ID" value="OsPr106_02g0026750.01"/>
    <property type="gene ID" value="OsPr106_02g0026750"/>
</dbReference>
<dbReference type="HOGENOM" id="CLU_071718_1_0_1"/>
<dbReference type="OMA" id="CATPDLW"/>
<dbReference type="Proteomes" id="UP000007015">
    <property type="component" value="Chromosome 2"/>
</dbReference>
<dbReference type="GO" id="GO:0005634">
    <property type="term" value="C:nucleus"/>
    <property type="evidence" value="ECO:0007669"/>
    <property type="project" value="UniProtKB-SubCell"/>
</dbReference>
<dbReference type="GO" id="GO:0000981">
    <property type="term" value="F:DNA-binding transcription factor activity, RNA polymerase II-specific"/>
    <property type="evidence" value="ECO:0007669"/>
    <property type="project" value="InterPro"/>
</dbReference>
<dbReference type="GO" id="GO:0043565">
    <property type="term" value="F:sequence-specific DNA binding"/>
    <property type="evidence" value="ECO:0007669"/>
    <property type="project" value="InterPro"/>
</dbReference>
<dbReference type="GO" id="GO:0045893">
    <property type="term" value="P:positive regulation of DNA-templated transcription"/>
    <property type="evidence" value="ECO:0007669"/>
    <property type="project" value="TreeGrafter"/>
</dbReference>
<dbReference type="CDD" id="cd00086">
    <property type="entry name" value="homeodomain"/>
    <property type="match status" value="1"/>
</dbReference>
<dbReference type="FunFam" id="1.10.10.60:FF:000274">
    <property type="entry name" value="Homeobox-leucine zipper protein HOX24"/>
    <property type="match status" value="1"/>
</dbReference>
<dbReference type="Gene3D" id="1.10.10.60">
    <property type="entry name" value="Homeodomain-like"/>
    <property type="match status" value="1"/>
</dbReference>
<dbReference type="InterPro" id="IPR001356">
    <property type="entry name" value="HD"/>
</dbReference>
<dbReference type="InterPro" id="IPR045224">
    <property type="entry name" value="HDZip_class_I_plant"/>
</dbReference>
<dbReference type="InterPro" id="IPR017970">
    <property type="entry name" value="Homeobox_CS"/>
</dbReference>
<dbReference type="InterPro" id="IPR009057">
    <property type="entry name" value="Homeodomain-like_sf"/>
</dbReference>
<dbReference type="InterPro" id="IPR000047">
    <property type="entry name" value="HTH_motif"/>
</dbReference>
<dbReference type="InterPro" id="IPR003106">
    <property type="entry name" value="Leu_zip_homeo"/>
</dbReference>
<dbReference type="PANTHER" id="PTHR24326">
    <property type="entry name" value="HOMEOBOX-LEUCINE ZIPPER PROTEIN"/>
    <property type="match status" value="1"/>
</dbReference>
<dbReference type="PANTHER" id="PTHR24326:SF341">
    <property type="entry name" value="HOMEOBOX-LEUCINE ZIPPER PROTEIN HOX24"/>
    <property type="match status" value="1"/>
</dbReference>
<dbReference type="Pfam" id="PF02183">
    <property type="entry name" value="HALZ"/>
    <property type="match status" value="1"/>
</dbReference>
<dbReference type="Pfam" id="PF00046">
    <property type="entry name" value="Homeodomain"/>
    <property type="match status" value="1"/>
</dbReference>
<dbReference type="PRINTS" id="PR00031">
    <property type="entry name" value="HTHREPRESSR"/>
</dbReference>
<dbReference type="SMART" id="SM00389">
    <property type="entry name" value="HOX"/>
    <property type="match status" value="1"/>
</dbReference>
<dbReference type="SUPFAM" id="SSF46689">
    <property type="entry name" value="Homeodomain-like"/>
    <property type="match status" value="1"/>
</dbReference>
<dbReference type="PROSITE" id="PS00027">
    <property type="entry name" value="HOMEOBOX_1"/>
    <property type="match status" value="1"/>
</dbReference>
<dbReference type="PROSITE" id="PS50071">
    <property type="entry name" value="HOMEOBOX_2"/>
    <property type="match status" value="1"/>
</dbReference>